<comment type="function">
    <text evidence="1">Mu-conotoxins block voltage-gated sodium channels. This toxin reversibly blocks voltage-gated sodium channel in cephalopods, with no alteration in the voltage dependence of sodium conductance or on the kinetics of inactivation (By similarity).</text>
</comment>
<comment type="subcellular location">
    <subcellularLocation>
        <location evidence="1">Secreted</location>
    </subcellularLocation>
</comment>
<comment type="tissue specificity">
    <text>Expressed by the venom duct.</text>
</comment>
<comment type="domain">
    <text>The cysteine framework is XII (C-C-C-C-CC-C-C).</text>
</comment>
<comment type="similarity">
    <text evidence="5">Belongs to the conotoxin O1 superfamily.</text>
</comment>
<dbReference type="EMBL" id="EF644196">
    <property type="protein sequence ID" value="ABR92966.1"/>
    <property type="molecule type" value="mRNA"/>
</dbReference>
<dbReference type="ConoServer" id="815">
    <property type="toxin name" value="Cal12.2a precursor"/>
</dbReference>
<dbReference type="GO" id="GO:0005576">
    <property type="term" value="C:extracellular region"/>
    <property type="evidence" value="ECO:0007669"/>
    <property type="project" value="UniProtKB-SubCell"/>
</dbReference>
<dbReference type="GO" id="GO:0008200">
    <property type="term" value="F:ion channel inhibitor activity"/>
    <property type="evidence" value="ECO:0007669"/>
    <property type="project" value="InterPro"/>
</dbReference>
<dbReference type="GO" id="GO:0090729">
    <property type="term" value="F:toxin activity"/>
    <property type="evidence" value="ECO:0007669"/>
    <property type="project" value="UniProtKB-KW"/>
</dbReference>
<dbReference type="InterPro" id="IPR004214">
    <property type="entry name" value="Conotoxin"/>
</dbReference>
<dbReference type="Pfam" id="PF02950">
    <property type="entry name" value="Conotoxin"/>
    <property type="match status" value="1"/>
</dbReference>
<sequence length="84" mass="9049">MKLTCVLVVLLLVLPFGDLITTSNTEDNKRGATPWQNSLKARGVCSTPEGSCVHNGCICQNAPCCHPSGCNWANVCPGFLWDKN</sequence>
<reference key="1">
    <citation type="journal article" date="2011" name="J. Exp. Biol.">
        <title>A diverse family of novel peptide toxins from an unusual cone snail, Conus californicus.</title>
        <authorList>
            <person name="Gilly W.F."/>
            <person name="Richmond T.A."/>
            <person name="Duda T.F. Jr."/>
            <person name="Elliger C."/>
            <person name="Lebaric Z."/>
            <person name="Schulz J."/>
            <person name="Bingham J.P."/>
            <person name="Sweedler J.V."/>
        </authorList>
    </citation>
    <scope>NUCLEOTIDE SEQUENCE [MRNA]</scope>
    <source>
        <tissue>Venom duct</tissue>
    </source>
</reference>
<reference key="2">
    <citation type="journal article" date="2010" name="Mol. Phylogenet. Evol.">
        <title>Evolution of Conus peptide toxins: analysis of Conus californicus Reeve, 1844.</title>
        <authorList>
            <person name="Biggs J.S."/>
            <person name="Watkins M."/>
            <person name="Puillandre N."/>
            <person name="Ownby J.P."/>
            <person name="Lopez-Vera E."/>
            <person name="Christensen S."/>
            <person name="Moreno K.J."/>
            <person name="Bernaldez J."/>
            <person name="Licea-Navarro A."/>
            <person name="Corneli P.S."/>
            <person name="Olivera B.M."/>
        </authorList>
    </citation>
    <scope>PROTEIN SEQUENCE OF 43-84</scope>
    <scope>HYDROXYLATION AT PRO-48</scope>
    <source>
        <tissue>Venom</tissue>
    </source>
</reference>
<keyword id="KW-0102">Bromination</keyword>
<keyword id="KW-0903">Direct protein sequencing</keyword>
<keyword id="KW-1015">Disulfide bond</keyword>
<keyword id="KW-0379">Hydroxylation</keyword>
<keyword id="KW-0872">Ion channel impairing toxin</keyword>
<keyword id="KW-0528">Neurotoxin</keyword>
<keyword id="KW-0964">Secreted</keyword>
<keyword id="KW-0732">Signal</keyword>
<keyword id="KW-0800">Toxin</keyword>
<proteinExistence type="evidence at protein level"/>
<name>COCA_CONCL</name>
<feature type="signal peptide" evidence="2">
    <location>
        <begin position="1"/>
        <end position="19"/>
    </location>
</feature>
<feature type="propeptide" id="PRO_0000392279" evidence="1">
    <location>
        <begin position="20"/>
        <end position="42"/>
    </location>
</feature>
<feature type="peptide" id="PRO_0000392280" description="Mu-conotoxin-like Cal 12.2a">
    <location>
        <begin position="43"/>
        <end position="84"/>
    </location>
</feature>
<feature type="modified residue" description="4-hydroxyproline" evidence="6">
    <location>
        <position position="48"/>
    </location>
</feature>
<feature type="modified residue" description="6'-bromotryptophan" evidence="1">
    <location>
        <position position="72"/>
    </location>
</feature>
<feature type="modified residue" description="4-hydroxyproline" evidence="1">
    <location>
        <position position="77"/>
    </location>
</feature>
<feature type="modified residue" description="6'-bromotryptophan" evidence="1">
    <location>
        <position position="81"/>
    </location>
</feature>
<feature type="disulfide bond" evidence="5">
    <location>
        <begin position="45"/>
        <end position="57"/>
    </location>
</feature>
<feature type="disulfide bond" evidence="1">
    <location>
        <begin position="52"/>
        <end position="65"/>
    </location>
</feature>
<feature type="disulfide bond" evidence="1">
    <location>
        <begin position="59"/>
        <end position="70"/>
    </location>
</feature>
<feature type="disulfide bond" evidence="1">
    <location>
        <begin position="64"/>
        <end position="76"/>
    </location>
</feature>
<accession>A6YR42</accession>
<accession>P0DJC1</accession>
<protein>
    <recommendedName>
        <fullName evidence="4">Mu-conotoxin-like Cal 12.2a</fullName>
    </recommendedName>
    <alternativeName>
        <fullName>Conotoxin CalTx 12.2.1A</fullName>
    </alternativeName>
    <alternativeName>
        <fullName evidence="3">Conotoxin Cl12a</fullName>
    </alternativeName>
</protein>
<evidence type="ECO:0000250" key="1"/>
<evidence type="ECO:0000255" key="2"/>
<evidence type="ECO:0000303" key="3">
    <source>
    </source>
</evidence>
<evidence type="ECO:0000303" key="4">
    <source>
    </source>
</evidence>
<evidence type="ECO:0000305" key="5"/>
<evidence type="ECO:0000305" key="6">
    <source>
    </source>
</evidence>
<organism>
    <name type="scientific">Californiconus californicus</name>
    <name type="common">California cone</name>
    <name type="synonym">Conus californicus</name>
    <dbReference type="NCBI Taxonomy" id="1736779"/>
    <lineage>
        <taxon>Eukaryota</taxon>
        <taxon>Metazoa</taxon>
        <taxon>Spiralia</taxon>
        <taxon>Lophotrochozoa</taxon>
        <taxon>Mollusca</taxon>
        <taxon>Gastropoda</taxon>
        <taxon>Caenogastropoda</taxon>
        <taxon>Neogastropoda</taxon>
        <taxon>Conoidea</taxon>
        <taxon>Conidae</taxon>
        <taxon>Californiconus</taxon>
    </lineage>
</organism>